<proteinExistence type="evidence at protein level"/>
<feature type="initiator methionine" description="Removed" evidence="1">
    <location>
        <position position="1"/>
    </location>
</feature>
<feature type="chain" id="PRO_0000056830" description="Phosphatidylserine synthase 1">
    <location>
        <begin position="2"/>
        <end position="473"/>
    </location>
</feature>
<feature type="topological domain" description="Cytoplasmic" evidence="2">
    <location>
        <begin position="2"/>
        <end position="35"/>
    </location>
</feature>
<feature type="transmembrane region" description="Helical" evidence="2">
    <location>
        <begin position="36"/>
        <end position="56"/>
    </location>
</feature>
<feature type="topological domain" description="Lumenal" evidence="2">
    <location>
        <begin position="57"/>
        <end position="72"/>
    </location>
</feature>
<feature type="transmembrane region" description="Helical" evidence="2">
    <location>
        <begin position="73"/>
        <end position="93"/>
    </location>
</feature>
<feature type="topological domain" description="Cytoplasmic" evidence="2">
    <location>
        <begin position="94"/>
        <end position="102"/>
    </location>
</feature>
<feature type="transmembrane region" description="Helical" evidence="2">
    <location>
        <begin position="103"/>
        <end position="123"/>
    </location>
</feature>
<feature type="topological domain" description="Lumenal" evidence="2">
    <location>
        <begin position="124"/>
        <end position="186"/>
    </location>
</feature>
<feature type="transmembrane region" description="Helical" evidence="2">
    <location>
        <begin position="187"/>
        <end position="207"/>
    </location>
</feature>
<feature type="topological domain" description="Cytoplasmic" evidence="2">
    <location>
        <begin position="208"/>
        <end position="216"/>
    </location>
</feature>
<feature type="transmembrane region" description="Helical" evidence="2">
    <location>
        <begin position="217"/>
        <end position="237"/>
    </location>
</feature>
<feature type="topological domain" description="Lumenal" evidence="2">
    <location>
        <begin position="238"/>
        <end position="286"/>
    </location>
</feature>
<feature type="transmembrane region" description="Helical" evidence="2">
    <location>
        <begin position="287"/>
        <end position="307"/>
    </location>
</feature>
<feature type="topological domain" description="Cytoplasmic" evidence="2">
    <location>
        <begin position="308"/>
        <end position="319"/>
    </location>
</feature>
<feature type="transmembrane region" description="Helical" evidence="2">
    <location>
        <begin position="320"/>
        <end position="342"/>
    </location>
</feature>
<feature type="topological domain" description="Lumenal" evidence="2">
    <location>
        <begin position="343"/>
        <end position="355"/>
    </location>
</feature>
<feature type="transmembrane region" description="Helical" evidence="2">
    <location>
        <begin position="356"/>
        <end position="376"/>
    </location>
</feature>
<feature type="topological domain" description="Cytoplasmic" evidence="2">
    <location>
        <begin position="377"/>
        <end position="383"/>
    </location>
</feature>
<feature type="transmembrane region" description="Helical" evidence="2">
    <location>
        <begin position="384"/>
        <end position="404"/>
    </location>
</feature>
<feature type="topological domain" description="Lumenal" evidence="2">
    <location>
        <begin position="405"/>
        <end position="473"/>
    </location>
</feature>
<feature type="region of interest" description="Disordered" evidence="3">
    <location>
        <begin position="428"/>
        <end position="473"/>
    </location>
</feature>
<feature type="compositionally biased region" description="Basic and acidic residues" evidence="3">
    <location>
        <begin position="437"/>
        <end position="454"/>
    </location>
</feature>
<feature type="compositionally biased region" description="Basic residues" evidence="3">
    <location>
        <begin position="455"/>
        <end position="464"/>
    </location>
</feature>
<feature type="modified residue" description="N-acetylalanine" evidence="1">
    <location>
        <position position="2"/>
    </location>
</feature>
<feature type="modified residue" description="Phosphoserine" evidence="11">
    <location>
        <position position="417"/>
    </location>
</feature>
<feature type="modified residue" description="Phosphoserine" evidence="11">
    <location>
        <position position="425"/>
    </location>
</feature>
<feature type="modified residue" description="Phosphoserine" evidence="1">
    <location>
        <position position="442"/>
    </location>
</feature>
<feature type="modified residue" description="Phosphoserine" evidence="1">
    <location>
        <position position="454"/>
    </location>
</feature>
<feature type="sequence conflict" description="In Ref. 1; AAB97845." evidence="8" ref="1">
    <original>D</original>
    <variation>E</variation>
    <location>
        <position position="166"/>
    </location>
</feature>
<feature type="sequence conflict" description="In Ref. 1; AAB97845." evidence="8" ref="1">
    <original>AFG</original>
    <variation>SFA</variation>
    <location>
        <begin position="169"/>
        <end position="171"/>
    </location>
</feature>
<feature type="sequence conflict" description="In Ref. 1; AAB97845." evidence="8" ref="1">
    <original>C</original>
    <variation>H</variation>
    <location>
        <position position="225"/>
    </location>
</feature>
<feature type="sequence conflict" description="In Ref. 2; BAC40117." evidence="8" ref="2">
    <original>F</original>
    <variation>L</variation>
    <location>
        <position position="250"/>
    </location>
</feature>
<feature type="sequence conflict" description="In Ref. 1; AAB97845." evidence="8" ref="1">
    <original>A</original>
    <variation>G</variation>
    <location>
        <position position="288"/>
    </location>
</feature>
<feature type="sequence conflict" description="In Ref. 1; AAB97845." evidence="8" ref="1">
    <original>F</original>
    <variation>S</variation>
    <location>
        <position position="305"/>
    </location>
</feature>
<feature type="sequence conflict" description="In Ref. 1; AAB97845 and 2; BAC40117." evidence="8" ref="1 2">
    <original>G</original>
    <variation>C</variation>
    <location>
        <position position="322"/>
    </location>
</feature>
<comment type="function">
    <text evidence="4 5 6 7">Catalyzes a base-exchange reaction in which the polar head group of phosphatidylethanolamine (PE) or phosphatidylcholine (PC) is replaced by L-serine (PubMed:10432300, PubMed:10938271, PubMed:18343815, PubMed:9516423). Catalyzes mainly the conversion of phosphatidylcholine (PubMed:10432300, PubMed:10938271, PubMed:18343815, PubMed:9516423). Also converts, in vitro and to a lesser extent, phosphatidylethanolamine (PubMed:10432300, PubMed:10938271, PubMed:18343815, PubMed:9516423).</text>
</comment>
<comment type="catalytic activity">
    <reaction evidence="4 5 6 7">
        <text>a 1,2-diacyl-sn-glycero-3-phosphoethanolamine + L-serine = a 1,2-diacyl-sn-glycero-3-phospho-L-serine + ethanolamine</text>
        <dbReference type="Rhea" id="RHEA:27606"/>
        <dbReference type="ChEBI" id="CHEBI:33384"/>
        <dbReference type="ChEBI" id="CHEBI:57262"/>
        <dbReference type="ChEBI" id="CHEBI:57603"/>
        <dbReference type="ChEBI" id="CHEBI:64612"/>
        <dbReference type="EC" id="2.7.8.29"/>
    </reaction>
    <physiologicalReaction direction="left-to-right" evidence="9">
        <dbReference type="Rhea" id="RHEA:27607"/>
    </physiologicalReaction>
</comment>
<comment type="catalytic activity">
    <reaction evidence="4 5 6 7">
        <text>a 1,2-diacyl-sn-glycero-3-phosphocholine + L-serine = a 1,2-diacyl-sn-glycero-3-phospho-L-serine + choline</text>
        <dbReference type="Rhea" id="RHEA:45088"/>
        <dbReference type="ChEBI" id="CHEBI:15354"/>
        <dbReference type="ChEBI" id="CHEBI:33384"/>
        <dbReference type="ChEBI" id="CHEBI:57262"/>
        <dbReference type="ChEBI" id="CHEBI:57643"/>
    </reaction>
    <physiologicalReaction direction="left-to-right" evidence="10">
        <dbReference type="Rhea" id="RHEA:45089"/>
    </physiologicalReaction>
</comment>
<comment type="activity regulation">
    <text evidence="5">Potently inhibited by choline in the mitochondria-associated membrane (MAM). Very little inhibition by choline in the endoplasmic reticulum (ER) per se.</text>
</comment>
<comment type="pathway">
    <text>Phospholipid metabolism; phosphatidylserine biosynthesis.</text>
</comment>
<comment type="subcellular location">
    <subcellularLocation>
        <location evidence="5">Endoplasmic reticulum membrane</location>
        <topology evidence="5">Multi-pass membrane protein</topology>
    </subcellularLocation>
    <text>Highly enriched in the mitochondria-associated membrane (MAM).</text>
</comment>
<comment type="tissue specificity">
    <text evidence="4">Expressed in kidney, testis, lung, skeletal muscle, liver brain, heart and spleen with highest expression in testis, liver, heart and brain.</text>
</comment>
<comment type="disruption phenotype">
    <text evidence="6">Null mice are viable, fertile and have a normal life span. Toal serine exchange is reduced up to 85%, but apart from in liver, the phosphatatidylserine content was unaltered. Elimination of either Pss1 or Pss2, but not both, is compatible with mouse viability. Mice can tolerate as little as 10% serine-exchange activity and are viable with small amounts of phosphatidylserine and phosphatidylethanolamine content. to phosphatidylethanolamine.</text>
</comment>
<comment type="similarity">
    <text evidence="8">Belongs to the phosphatidyl serine synthase family.</text>
</comment>
<keyword id="KW-0007">Acetylation</keyword>
<keyword id="KW-0256">Endoplasmic reticulum</keyword>
<keyword id="KW-0444">Lipid biosynthesis</keyword>
<keyword id="KW-0443">Lipid metabolism</keyword>
<keyword id="KW-0472">Membrane</keyword>
<keyword id="KW-0594">Phospholipid biosynthesis</keyword>
<keyword id="KW-1208">Phospholipid metabolism</keyword>
<keyword id="KW-0597">Phosphoprotein</keyword>
<keyword id="KW-1185">Reference proteome</keyword>
<keyword id="KW-0808">Transferase</keyword>
<keyword id="KW-0812">Transmembrane</keyword>
<keyword id="KW-1133">Transmembrane helix</keyword>
<accession>Q99LH2</accession>
<accession>O55024</accession>
<accession>Q3UV14</accession>
<accession>Q8C2S8</accession>
<dbReference type="EC" id="2.7.8.29" evidence="4 5 6 7"/>
<dbReference type="EMBL" id="AF042731">
    <property type="protein sequence ID" value="AAB97845.1"/>
    <property type="molecule type" value="mRNA"/>
</dbReference>
<dbReference type="EMBL" id="AK036990">
    <property type="protein sequence ID" value="BAC29660.1"/>
    <property type="molecule type" value="mRNA"/>
</dbReference>
<dbReference type="EMBL" id="AK054101">
    <property type="protein sequence ID" value="BAC35656.1"/>
    <property type="molecule type" value="mRNA"/>
</dbReference>
<dbReference type="EMBL" id="AK085857">
    <property type="protein sequence ID" value="BAC39555.1"/>
    <property type="molecule type" value="mRNA"/>
</dbReference>
<dbReference type="EMBL" id="AK088048">
    <property type="protein sequence ID" value="BAC40117.1"/>
    <property type="molecule type" value="mRNA"/>
</dbReference>
<dbReference type="EMBL" id="AK137681">
    <property type="protein sequence ID" value="BAE23459.1"/>
    <property type="molecule type" value="mRNA"/>
</dbReference>
<dbReference type="EMBL" id="BC003260">
    <property type="protein sequence ID" value="AAH03260.1"/>
    <property type="molecule type" value="mRNA"/>
</dbReference>
<dbReference type="CCDS" id="CCDS26612.1"/>
<dbReference type="RefSeq" id="NP_032985.2">
    <property type="nucleotide sequence ID" value="NM_008959.3"/>
</dbReference>
<dbReference type="SMR" id="Q99LH2"/>
<dbReference type="BioGRID" id="202448">
    <property type="interactions" value="3"/>
</dbReference>
<dbReference type="FunCoup" id="Q99LH2">
    <property type="interactions" value="1122"/>
</dbReference>
<dbReference type="STRING" id="10090.ENSMUSP00000021990"/>
<dbReference type="iPTMnet" id="Q99LH2"/>
<dbReference type="PhosphoSitePlus" id="Q99LH2"/>
<dbReference type="SwissPalm" id="Q99LH2"/>
<dbReference type="jPOST" id="Q99LH2"/>
<dbReference type="PaxDb" id="10090-ENSMUSP00000021990"/>
<dbReference type="ProteomicsDB" id="301980"/>
<dbReference type="Pumba" id="Q99LH2"/>
<dbReference type="Antibodypedia" id="12969">
    <property type="antibodies" value="144 antibodies from 23 providers"/>
</dbReference>
<dbReference type="DNASU" id="19210"/>
<dbReference type="Ensembl" id="ENSMUST00000021990.4">
    <property type="protein sequence ID" value="ENSMUSP00000021990.4"/>
    <property type="gene ID" value="ENSMUSG00000021518.5"/>
</dbReference>
<dbReference type="GeneID" id="19210"/>
<dbReference type="KEGG" id="mmu:19210"/>
<dbReference type="UCSC" id="uc007qzz.1">
    <property type="organism name" value="mouse"/>
</dbReference>
<dbReference type="AGR" id="MGI:1276575"/>
<dbReference type="CTD" id="9791"/>
<dbReference type="MGI" id="MGI:1276575">
    <property type="gene designation" value="Ptdss1"/>
</dbReference>
<dbReference type="VEuPathDB" id="HostDB:ENSMUSG00000021518"/>
<dbReference type="eggNOG" id="KOG2735">
    <property type="taxonomic scope" value="Eukaryota"/>
</dbReference>
<dbReference type="GeneTree" id="ENSGT00530000063576"/>
<dbReference type="HOGENOM" id="CLU_037661_3_0_1"/>
<dbReference type="InParanoid" id="Q99LH2"/>
<dbReference type="OMA" id="LPNFWEC"/>
<dbReference type="OrthoDB" id="10265393at2759"/>
<dbReference type="PhylomeDB" id="Q99LH2"/>
<dbReference type="TreeFam" id="TF300012"/>
<dbReference type="BRENDA" id="2.7.8.29">
    <property type="organism ID" value="3474"/>
</dbReference>
<dbReference type="Reactome" id="R-MMU-1483101">
    <property type="pathway name" value="Synthesis of PS"/>
</dbReference>
<dbReference type="UniPathway" id="UPA00948"/>
<dbReference type="BioGRID-ORCS" id="19210">
    <property type="hits" value="9 hits in 80 CRISPR screens"/>
</dbReference>
<dbReference type="ChiTaRS" id="Ptdss1">
    <property type="organism name" value="mouse"/>
</dbReference>
<dbReference type="PRO" id="PR:Q99LH2"/>
<dbReference type="Proteomes" id="UP000000589">
    <property type="component" value="Chromosome 13"/>
</dbReference>
<dbReference type="RNAct" id="Q99LH2">
    <property type="molecule type" value="protein"/>
</dbReference>
<dbReference type="Bgee" id="ENSMUSG00000021518">
    <property type="expression patterns" value="Expressed in external carotid artery and 274 other cell types or tissues"/>
</dbReference>
<dbReference type="ExpressionAtlas" id="Q99LH2">
    <property type="expression patterns" value="baseline and differential"/>
</dbReference>
<dbReference type="GO" id="GO:0005789">
    <property type="term" value="C:endoplasmic reticulum membrane"/>
    <property type="evidence" value="ECO:0000314"/>
    <property type="project" value="UniProtKB"/>
</dbReference>
<dbReference type="GO" id="GO:0016020">
    <property type="term" value="C:membrane"/>
    <property type="evidence" value="ECO:0000250"/>
    <property type="project" value="UniProtKB"/>
</dbReference>
<dbReference type="GO" id="GO:0106258">
    <property type="term" value="F:L-serine-phosphatidylcholine phosphatidyltransferase activity"/>
    <property type="evidence" value="ECO:0000314"/>
    <property type="project" value="UniProtKB"/>
</dbReference>
<dbReference type="GO" id="GO:0106245">
    <property type="term" value="F:L-serine-phosphatidylethanolamine phosphatidyltransferase activity"/>
    <property type="evidence" value="ECO:0000314"/>
    <property type="project" value="UniProtKB"/>
</dbReference>
<dbReference type="GO" id="GO:0006659">
    <property type="term" value="P:phosphatidylserine biosynthetic process"/>
    <property type="evidence" value="ECO:0007669"/>
    <property type="project" value="UniProtKB-UniPathway"/>
</dbReference>
<dbReference type="InterPro" id="IPR004277">
    <property type="entry name" value="PSS"/>
</dbReference>
<dbReference type="PANTHER" id="PTHR15362">
    <property type="entry name" value="PHOSPHATIDYLINOSITOL SYNTHASE"/>
    <property type="match status" value="1"/>
</dbReference>
<dbReference type="PANTHER" id="PTHR15362:SF15">
    <property type="entry name" value="PHOSPHATIDYLSERINE SYNTHASE 1"/>
    <property type="match status" value="1"/>
</dbReference>
<dbReference type="Pfam" id="PF03034">
    <property type="entry name" value="PSS"/>
    <property type="match status" value="1"/>
</dbReference>
<evidence type="ECO:0000250" key="1">
    <source>
        <dbReference type="UniProtKB" id="P48651"/>
    </source>
</evidence>
<evidence type="ECO:0000255" key="2"/>
<evidence type="ECO:0000256" key="3">
    <source>
        <dbReference type="SAM" id="MobiDB-lite"/>
    </source>
</evidence>
<evidence type="ECO:0000269" key="4">
    <source>
    </source>
</evidence>
<evidence type="ECO:0000269" key="5">
    <source>
    </source>
</evidence>
<evidence type="ECO:0000269" key="6">
    <source>
    </source>
</evidence>
<evidence type="ECO:0000269" key="7">
    <source>
    </source>
</evidence>
<evidence type="ECO:0000305" key="8"/>
<evidence type="ECO:0000305" key="9">
    <source>
    </source>
</evidence>
<evidence type="ECO:0000305" key="10">
    <source>
    </source>
</evidence>
<evidence type="ECO:0007744" key="11">
    <source>
    </source>
</evidence>
<sequence length="473" mass="55604">MASCVGSRTLSKDDVNYRMHFRMINEQQVEDITIDFFYRPHTITLLSFTIISLMYFAFTRDDSVPEDNIWRGILSVIFFFLIISVLAFPNGPFTRPHPALWRMVFGLSVLYFLFLVFLLFLNFEQVKSLMYWLDPNLRYATREADIMEYAVNCHVITWERIVSHFDIFAFGHFWGWAMKALLIRSYGLCWTISITWELTELFFMHLLPNFAECWWDQVILDILLCNGGGIWLGMVVCRFLEMRTYHWASFKDIHTTTGKIKRAVLQFTPASWTYVRWFDPKSSFQRVAGIYLFMIIWQLTELNTFFLKHIFVFQASHPLSWGRILFIGCITAPTVRQYYAYLTDTQCKRVGTQCWVFGVIGFLEAIVCIKFGQDLFSKTQILYVMLWLLCVAFTTFLCLYGMVWYAEHYGHREKTYSECEDGTYSPEISWHHGKGSKGSEDSPPKHSSNHESHSSRRRNRHSKSKVTNGVGKK</sequence>
<protein>
    <recommendedName>
        <fullName>Phosphatidylserine synthase 1</fullName>
        <shortName>PSS-1</shortName>
        <shortName>PtdSer synthase 1</shortName>
        <ecNumber evidence="4 5 6 7">2.7.8.29</ecNumber>
    </recommendedName>
    <alternativeName>
        <fullName>Serine-exchange enzyme I</fullName>
    </alternativeName>
</protein>
<organism>
    <name type="scientific">Mus musculus</name>
    <name type="common">Mouse</name>
    <dbReference type="NCBI Taxonomy" id="10090"/>
    <lineage>
        <taxon>Eukaryota</taxon>
        <taxon>Metazoa</taxon>
        <taxon>Chordata</taxon>
        <taxon>Craniata</taxon>
        <taxon>Vertebrata</taxon>
        <taxon>Euteleostomi</taxon>
        <taxon>Mammalia</taxon>
        <taxon>Eutheria</taxon>
        <taxon>Euarchontoglires</taxon>
        <taxon>Glires</taxon>
        <taxon>Rodentia</taxon>
        <taxon>Myomorpha</taxon>
        <taxon>Muroidea</taxon>
        <taxon>Muridae</taxon>
        <taxon>Murinae</taxon>
        <taxon>Mus</taxon>
        <taxon>Mus</taxon>
    </lineage>
</organism>
<name>PTSS1_MOUSE</name>
<reference key="1">
    <citation type="journal article" date="1998" name="J. Biol. Chem.">
        <title>Cloning and expression of mouse liver phosphatidylserine synthase-1 cDNA. Overexpression in rat hepatoma cells inhibits the CDP-ethanolamine pathway for phosphatidylethanolamine biosynthesis.</title>
        <authorList>
            <person name="Stone S.J."/>
            <person name="Cui Z."/>
            <person name="Vance J.E."/>
        </authorList>
    </citation>
    <scope>NUCLEOTIDE SEQUENCE [MRNA]</scope>
    <scope>FUNCTION</scope>
    <scope>CATALYTIC ACTIVITY</scope>
    <source>
        <tissue>Liver</tissue>
    </source>
</reference>
<reference key="2">
    <citation type="journal article" date="2005" name="Science">
        <title>The transcriptional landscape of the mammalian genome.</title>
        <authorList>
            <person name="Carninci P."/>
            <person name="Kasukawa T."/>
            <person name="Katayama S."/>
            <person name="Gough J."/>
            <person name="Frith M.C."/>
            <person name="Maeda N."/>
            <person name="Oyama R."/>
            <person name="Ravasi T."/>
            <person name="Lenhard B."/>
            <person name="Wells C."/>
            <person name="Kodzius R."/>
            <person name="Shimokawa K."/>
            <person name="Bajic V.B."/>
            <person name="Brenner S.E."/>
            <person name="Batalov S."/>
            <person name="Forrest A.R."/>
            <person name="Zavolan M."/>
            <person name="Davis M.J."/>
            <person name="Wilming L.G."/>
            <person name="Aidinis V."/>
            <person name="Allen J.E."/>
            <person name="Ambesi-Impiombato A."/>
            <person name="Apweiler R."/>
            <person name="Aturaliya R.N."/>
            <person name="Bailey T.L."/>
            <person name="Bansal M."/>
            <person name="Baxter L."/>
            <person name="Beisel K.W."/>
            <person name="Bersano T."/>
            <person name="Bono H."/>
            <person name="Chalk A.M."/>
            <person name="Chiu K.P."/>
            <person name="Choudhary V."/>
            <person name="Christoffels A."/>
            <person name="Clutterbuck D.R."/>
            <person name="Crowe M.L."/>
            <person name="Dalla E."/>
            <person name="Dalrymple B.P."/>
            <person name="de Bono B."/>
            <person name="Della Gatta G."/>
            <person name="di Bernardo D."/>
            <person name="Down T."/>
            <person name="Engstrom P."/>
            <person name="Fagiolini M."/>
            <person name="Faulkner G."/>
            <person name="Fletcher C.F."/>
            <person name="Fukushima T."/>
            <person name="Furuno M."/>
            <person name="Futaki S."/>
            <person name="Gariboldi M."/>
            <person name="Georgii-Hemming P."/>
            <person name="Gingeras T.R."/>
            <person name="Gojobori T."/>
            <person name="Green R.E."/>
            <person name="Gustincich S."/>
            <person name="Harbers M."/>
            <person name="Hayashi Y."/>
            <person name="Hensch T.K."/>
            <person name="Hirokawa N."/>
            <person name="Hill D."/>
            <person name="Huminiecki L."/>
            <person name="Iacono M."/>
            <person name="Ikeo K."/>
            <person name="Iwama A."/>
            <person name="Ishikawa T."/>
            <person name="Jakt M."/>
            <person name="Kanapin A."/>
            <person name="Katoh M."/>
            <person name="Kawasawa Y."/>
            <person name="Kelso J."/>
            <person name="Kitamura H."/>
            <person name="Kitano H."/>
            <person name="Kollias G."/>
            <person name="Krishnan S.P."/>
            <person name="Kruger A."/>
            <person name="Kummerfeld S.K."/>
            <person name="Kurochkin I.V."/>
            <person name="Lareau L.F."/>
            <person name="Lazarevic D."/>
            <person name="Lipovich L."/>
            <person name="Liu J."/>
            <person name="Liuni S."/>
            <person name="McWilliam S."/>
            <person name="Madan Babu M."/>
            <person name="Madera M."/>
            <person name="Marchionni L."/>
            <person name="Matsuda H."/>
            <person name="Matsuzawa S."/>
            <person name="Miki H."/>
            <person name="Mignone F."/>
            <person name="Miyake S."/>
            <person name="Morris K."/>
            <person name="Mottagui-Tabar S."/>
            <person name="Mulder N."/>
            <person name="Nakano N."/>
            <person name="Nakauchi H."/>
            <person name="Ng P."/>
            <person name="Nilsson R."/>
            <person name="Nishiguchi S."/>
            <person name="Nishikawa S."/>
            <person name="Nori F."/>
            <person name="Ohara O."/>
            <person name="Okazaki Y."/>
            <person name="Orlando V."/>
            <person name="Pang K.C."/>
            <person name="Pavan W.J."/>
            <person name="Pavesi G."/>
            <person name="Pesole G."/>
            <person name="Petrovsky N."/>
            <person name="Piazza S."/>
            <person name="Reed J."/>
            <person name="Reid J.F."/>
            <person name="Ring B.Z."/>
            <person name="Ringwald M."/>
            <person name="Rost B."/>
            <person name="Ruan Y."/>
            <person name="Salzberg S.L."/>
            <person name="Sandelin A."/>
            <person name="Schneider C."/>
            <person name="Schoenbach C."/>
            <person name="Sekiguchi K."/>
            <person name="Semple C.A."/>
            <person name="Seno S."/>
            <person name="Sessa L."/>
            <person name="Sheng Y."/>
            <person name="Shibata Y."/>
            <person name="Shimada H."/>
            <person name="Shimada K."/>
            <person name="Silva D."/>
            <person name="Sinclair B."/>
            <person name="Sperling S."/>
            <person name="Stupka E."/>
            <person name="Sugiura K."/>
            <person name="Sultana R."/>
            <person name="Takenaka Y."/>
            <person name="Taki K."/>
            <person name="Tammoja K."/>
            <person name="Tan S.L."/>
            <person name="Tang S."/>
            <person name="Taylor M.S."/>
            <person name="Tegner J."/>
            <person name="Teichmann S.A."/>
            <person name="Ueda H.R."/>
            <person name="van Nimwegen E."/>
            <person name="Verardo R."/>
            <person name="Wei C.L."/>
            <person name="Yagi K."/>
            <person name="Yamanishi H."/>
            <person name="Zabarovsky E."/>
            <person name="Zhu S."/>
            <person name="Zimmer A."/>
            <person name="Hide W."/>
            <person name="Bult C."/>
            <person name="Grimmond S.M."/>
            <person name="Teasdale R.D."/>
            <person name="Liu E.T."/>
            <person name="Brusic V."/>
            <person name="Quackenbush J."/>
            <person name="Wahlestedt C."/>
            <person name="Mattick J.S."/>
            <person name="Hume D.A."/>
            <person name="Kai C."/>
            <person name="Sasaki D."/>
            <person name="Tomaru Y."/>
            <person name="Fukuda S."/>
            <person name="Kanamori-Katayama M."/>
            <person name="Suzuki M."/>
            <person name="Aoki J."/>
            <person name="Arakawa T."/>
            <person name="Iida J."/>
            <person name="Imamura K."/>
            <person name="Itoh M."/>
            <person name="Kato T."/>
            <person name="Kawaji H."/>
            <person name="Kawagashira N."/>
            <person name="Kawashima T."/>
            <person name="Kojima M."/>
            <person name="Kondo S."/>
            <person name="Konno H."/>
            <person name="Nakano K."/>
            <person name="Ninomiya N."/>
            <person name="Nishio T."/>
            <person name="Okada M."/>
            <person name="Plessy C."/>
            <person name="Shibata K."/>
            <person name="Shiraki T."/>
            <person name="Suzuki S."/>
            <person name="Tagami M."/>
            <person name="Waki K."/>
            <person name="Watahiki A."/>
            <person name="Okamura-Oho Y."/>
            <person name="Suzuki H."/>
            <person name="Kawai J."/>
            <person name="Hayashizaki Y."/>
        </authorList>
    </citation>
    <scope>NUCLEOTIDE SEQUENCE [LARGE SCALE MRNA]</scope>
    <source>
        <strain>C57BL/6J</strain>
        <tissue>Heart</tissue>
        <tissue>Oviduct</tissue>
        <tissue>Thymus</tissue>
        <tissue>Vagina</tissue>
    </source>
</reference>
<reference key="3">
    <citation type="journal article" date="2004" name="Genome Res.">
        <title>The status, quality, and expansion of the NIH full-length cDNA project: the Mammalian Gene Collection (MGC).</title>
        <authorList>
            <consortium name="The MGC Project Team"/>
        </authorList>
    </citation>
    <scope>NUCLEOTIDE SEQUENCE [LARGE SCALE MRNA]</scope>
    <source>
        <tissue>Mammary tumor</tissue>
    </source>
</reference>
<reference key="4">
    <citation type="journal article" date="1999" name="Biochem. J.">
        <title>Cloning and expression of murine liver phosphatidylserine synthase (PSS)-2: differential regulation of phospholipid metabolism by PSS1 and PSS2.</title>
        <authorList>
            <person name="Stone S.J."/>
            <person name="Vance J.E."/>
        </authorList>
    </citation>
    <scope>FUNCTION</scope>
    <scope>CATALYTIC ACTIVITY</scope>
    <scope>TISSUE SPECIFICITY</scope>
    <source>
        <strain>BALB/cJ</strain>
        <tissue>Liver</tissue>
    </source>
</reference>
<reference key="5">
    <citation type="journal article" date="2000" name="J. Biol. Chem.">
        <title>Phosphatidylserine synthase-1 and -2 are localized to mitochondria-associated membranes.</title>
        <authorList>
            <person name="Stone S.J."/>
            <person name="Vance J.E."/>
        </authorList>
    </citation>
    <scope>FUNCTION</scope>
    <scope>CATALYTIC ACTIVITY</scope>
    <scope>ACTIVITY REGULATION</scope>
    <scope>SUBSTRATE SPECIFICITY</scope>
    <scope>SUBCELLULAR LOCATION</scope>
</reference>
<reference key="6">
    <citation type="journal article" date="2008" name="J. Biol. Chem.">
        <title>Defining the importance of phosphatidylserine synthase-1 (PSS1): unexpected viability of PSS1-deficient mice.</title>
        <authorList>
            <person name="Arikketh D."/>
            <person name="Nelson R."/>
            <person name="Vance J.E."/>
        </authorList>
    </citation>
    <scope>FUNCTION</scope>
    <scope>CATALYTIC ACTIVITY</scope>
    <scope>DISRUPTION PHENOTYPE</scope>
</reference>
<reference key="7">
    <citation type="journal article" date="2010" name="Cell">
        <title>A tissue-specific atlas of mouse protein phosphorylation and expression.</title>
        <authorList>
            <person name="Huttlin E.L."/>
            <person name="Jedrychowski M.P."/>
            <person name="Elias J.E."/>
            <person name="Goswami T."/>
            <person name="Rad R."/>
            <person name="Beausoleil S.A."/>
            <person name="Villen J."/>
            <person name="Haas W."/>
            <person name="Sowa M.E."/>
            <person name="Gygi S.P."/>
        </authorList>
    </citation>
    <scope>PHOSPHORYLATION [LARGE SCALE ANALYSIS] AT SER-417 AND SER-425</scope>
    <scope>IDENTIFICATION BY MASS SPECTROMETRY [LARGE SCALE ANALYSIS]</scope>
    <source>
        <tissue>Brain</tissue>
        <tissue>Kidney</tissue>
        <tissue>Lung</tissue>
        <tissue>Pancreas</tissue>
        <tissue>Spleen</tissue>
    </source>
</reference>
<gene>
    <name type="primary">Ptdss1</name>
    <name type="synonym">Pssa</name>
</gene>